<proteinExistence type="inferred from homology"/>
<gene>
    <name type="ordered locus">LCK_01372</name>
</gene>
<accession>B1N094</accession>
<organism>
    <name type="scientific">Leuconostoc citreum (strain KM20)</name>
    <dbReference type="NCBI Taxonomy" id="349519"/>
    <lineage>
        <taxon>Bacteria</taxon>
        <taxon>Bacillati</taxon>
        <taxon>Bacillota</taxon>
        <taxon>Bacilli</taxon>
        <taxon>Lactobacillales</taxon>
        <taxon>Lactobacillaceae</taxon>
        <taxon>Leuconostoc</taxon>
    </lineage>
</organism>
<comment type="similarity">
    <text evidence="1">Belongs to the UPF0637 family.</text>
</comment>
<name>Y1372_LEUCK</name>
<sequence>MIFKQEDFKVFDEQTLDGRMQGIRSVIDPKFEQLAKVILPLLSEDGQAWYAHIAKHLRRTTNPPENTWVAFAPNKRGYKMMPHYEVGMWDDHVYIYLAVEENMKPVSTQKIVAQMTKARELVARLPATFTLSQDHMVNKTEPLTLTHYDLAVQKFAETKHSEVLIGLQIMKSDYETLSFEDTNHIMATFKALRAIYEIIK</sequence>
<reference key="1">
    <citation type="journal article" date="2008" name="J. Bacteriol.">
        <title>Complete genome sequence of Leuconostoc citreum KM20.</title>
        <authorList>
            <person name="Kim J.F."/>
            <person name="Jeong H."/>
            <person name="Lee J.-S."/>
            <person name="Choi S.-H."/>
            <person name="Ha M."/>
            <person name="Hur C.-G."/>
            <person name="Kim J.-S."/>
            <person name="Lee S."/>
            <person name="Park H.-S."/>
            <person name="Park Y.-H."/>
            <person name="Oh T.K."/>
        </authorList>
    </citation>
    <scope>NUCLEOTIDE SEQUENCE [LARGE SCALE GENOMIC DNA]</scope>
    <source>
        <strain>KM20</strain>
    </source>
</reference>
<dbReference type="EMBL" id="DQ489736">
    <property type="protein sequence ID" value="ACA83196.1"/>
    <property type="molecule type" value="Genomic_DNA"/>
</dbReference>
<dbReference type="RefSeq" id="WP_004906626.1">
    <property type="nucleotide sequence ID" value="NC_010471.1"/>
</dbReference>
<dbReference type="SMR" id="B1N094"/>
<dbReference type="STRING" id="349519.LCK_01372"/>
<dbReference type="KEGG" id="lci:LCK_01372"/>
<dbReference type="eggNOG" id="COG4493">
    <property type="taxonomic scope" value="Bacteria"/>
</dbReference>
<dbReference type="HOGENOM" id="CLU_096059_0_0_9"/>
<dbReference type="OrthoDB" id="9812818at2"/>
<dbReference type="Proteomes" id="UP000002166">
    <property type="component" value="Chromosome"/>
</dbReference>
<dbReference type="Gene3D" id="3.30.930.20">
    <property type="entry name" value="Protein of unknown function DUF1054"/>
    <property type="match status" value="1"/>
</dbReference>
<dbReference type="HAMAP" id="MF_01851">
    <property type="entry name" value="UPF0637"/>
    <property type="match status" value="1"/>
</dbReference>
<dbReference type="InterPro" id="IPR009403">
    <property type="entry name" value="UPF0637"/>
</dbReference>
<dbReference type="InterPro" id="IPR053707">
    <property type="entry name" value="UPF0637_domain_sf"/>
</dbReference>
<dbReference type="Pfam" id="PF06335">
    <property type="entry name" value="DUF1054"/>
    <property type="match status" value="1"/>
</dbReference>
<dbReference type="SUPFAM" id="SSF142913">
    <property type="entry name" value="YktB/PF0168-like"/>
    <property type="match status" value="1"/>
</dbReference>
<evidence type="ECO:0000255" key="1">
    <source>
        <dbReference type="HAMAP-Rule" id="MF_01851"/>
    </source>
</evidence>
<protein>
    <recommendedName>
        <fullName evidence="1">UPF0637 protein LCK_01372</fullName>
    </recommendedName>
</protein>
<keyword id="KW-1185">Reference proteome</keyword>
<feature type="chain" id="PRO_0000348311" description="UPF0637 protein LCK_01372">
    <location>
        <begin position="1"/>
        <end position="200"/>
    </location>
</feature>